<accession>A7GN42</accession>
<sequence>MTKITVIGAGSWGTALAMVLADNGHDVRIWGNRPELMDEINTKHENKRYLPGITLPSTIVAYSSLEEALVDVSTVLLVVPTKAYREVLQDMKKVISGPMTWIHASKGIEPGTSKRISEMIEEEIPEHLIRDVVVLSGPSHAEEVALRQATTVTSAAKRMEAAEEVQDLFMNHYFRVYTNPDIIGVELGGALKNIIALAAGITDGLGLGDNAKAALMTRGLTEIARLGRKMGGNPLTFAGLTGMGDLIVTCTSVHSRNWRAGNMLGKGHSLEEVLDSMGMVVEGVRTTKAAYELAEKMEVEMPITAALYDVLFNGKNVKDAVGSLMGRVRKHEVEAIPDLSR</sequence>
<dbReference type="EC" id="1.1.1.94" evidence="1"/>
<dbReference type="EMBL" id="CP000764">
    <property type="protein sequence ID" value="ABS21550.1"/>
    <property type="molecule type" value="Genomic_DNA"/>
</dbReference>
<dbReference type="RefSeq" id="WP_011984302.1">
    <property type="nucleotide sequence ID" value="NC_009674.1"/>
</dbReference>
<dbReference type="SMR" id="A7GN42"/>
<dbReference type="STRING" id="315749.Bcer98_1228"/>
<dbReference type="GeneID" id="33896577"/>
<dbReference type="KEGG" id="bcy:Bcer98_1228"/>
<dbReference type="eggNOG" id="COG0240">
    <property type="taxonomic scope" value="Bacteria"/>
</dbReference>
<dbReference type="HOGENOM" id="CLU_033449_0_2_9"/>
<dbReference type="OrthoDB" id="9812273at2"/>
<dbReference type="UniPathway" id="UPA00940"/>
<dbReference type="Proteomes" id="UP000002300">
    <property type="component" value="Chromosome"/>
</dbReference>
<dbReference type="GO" id="GO:0005829">
    <property type="term" value="C:cytosol"/>
    <property type="evidence" value="ECO:0007669"/>
    <property type="project" value="TreeGrafter"/>
</dbReference>
<dbReference type="GO" id="GO:0047952">
    <property type="term" value="F:glycerol-3-phosphate dehydrogenase [NAD(P)+] activity"/>
    <property type="evidence" value="ECO:0007669"/>
    <property type="project" value="UniProtKB-UniRule"/>
</dbReference>
<dbReference type="GO" id="GO:0051287">
    <property type="term" value="F:NAD binding"/>
    <property type="evidence" value="ECO:0007669"/>
    <property type="project" value="InterPro"/>
</dbReference>
<dbReference type="GO" id="GO:0005975">
    <property type="term" value="P:carbohydrate metabolic process"/>
    <property type="evidence" value="ECO:0007669"/>
    <property type="project" value="InterPro"/>
</dbReference>
<dbReference type="GO" id="GO:0046167">
    <property type="term" value="P:glycerol-3-phosphate biosynthetic process"/>
    <property type="evidence" value="ECO:0007669"/>
    <property type="project" value="UniProtKB-UniRule"/>
</dbReference>
<dbReference type="GO" id="GO:0046168">
    <property type="term" value="P:glycerol-3-phosphate catabolic process"/>
    <property type="evidence" value="ECO:0007669"/>
    <property type="project" value="InterPro"/>
</dbReference>
<dbReference type="GO" id="GO:0006650">
    <property type="term" value="P:glycerophospholipid metabolic process"/>
    <property type="evidence" value="ECO:0007669"/>
    <property type="project" value="UniProtKB-UniRule"/>
</dbReference>
<dbReference type="GO" id="GO:0008654">
    <property type="term" value="P:phospholipid biosynthetic process"/>
    <property type="evidence" value="ECO:0007669"/>
    <property type="project" value="UniProtKB-KW"/>
</dbReference>
<dbReference type="FunFam" id="1.10.1040.10:FF:000001">
    <property type="entry name" value="Glycerol-3-phosphate dehydrogenase [NAD(P)+]"/>
    <property type="match status" value="1"/>
</dbReference>
<dbReference type="FunFam" id="3.40.50.720:FF:000019">
    <property type="entry name" value="Glycerol-3-phosphate dehydrogenase [NAD(P)+]"/>
    <property type="match status" value="1"/>
</dbReference>
<dbReference type="Gene3D" id="1.10.1040.10">
    <property type="entry name" value="N-(1-d-carboxylethyl)-l-norvaline Dehydrogenase, domain 2"/>
    <property type="match status" value="1"/>
</dbReference>
<dbReference type="Gene3D" id="3.40.50.720">
    <property type="entry name" value="NAD(P)-binding Rossmann-like Domain"/>
    <property type="match status" value="1"/>
</dbReference>
<dbReference type="HAMAP" id="MF_00394">
    <property type="entry name" value="NAD_Glyc3P_dehydrog"/>
    <property type="match status" value="1"/>
</dbReference>
<dbReference type="InterPro" id="IPR008927">
    <property type="entry name" value="6-PGluconate_DH-like_C_sf"/>
</dbReference>
<dbReference type="InterPro" id="IPR013328">
    <property type="entry name" value="6PGD_dom2"/>
</dbReference>
<dbReference type="InterPro" id="IPR006168">
    <property type="entry name" value="G3P_DH_NAD-dep"/>
</dbReference>
<dbReference type="InterPro" id="IPR006109">
    <property type="entry name" value="G3P_DH_NAD-dep_C"/>
</dbReference>
<dbReference type="InterPro" id="IPR011128">
    <property type="entry name" value="G3P_DH_NAD-dep_N"/>
</dbReference>
<dbReference type="InterPro" id="IPR036291">
    <property type="entry name" value="NAD(P)-bd_dom_sf"/>
</dbReference>
<dbReference type="NCBIfam" id="NF000940">
    <property type="entry name" value="PRK00094.1-2"/>
    <property type="match status" value="1"/>
</dbReference>
<dbReference type="NCBIfam" id="NF000941">
    <property type="entry name" value="PRK00094.1-3"/>
    <property type="match status" value="1"/>
</dbReference>
<dbReference type="NCBIfam" id="NF000942">
    <property type="entry name" value="PRK00094.1-4"/>
    <property type="match status" value="1"/>
</dbReference>
<dbReference type="PANTHER" id="PTHR11728">
    <property type="entry name" value="GLYCEROL-3-PHOSPHATE DEHYDROGENASE"/>
    <property type="match status" value="1"/>
</dbReference>
<dbReference type="PANTHER" id="PTHR11728:SF1">
    <property type="entry name" value="GLYCEROL-3-PHOSPHATE DEHYDROGENASE [NAD(+)] 2, CHLOROPLASTIC"/>
    <property type="match status" value="1"/>
</dbReference>
<dbReference type="Pfam" id="PF07479">
    <property type="entry name" value="NAD_Gly3P_dh_C"/>
    <property type="match status" value="1"/>
</dbReference>
<dbReference type="Pfam" id="PF01210">
    <property type="entry name" value="NAD_Gly3P_dh_N"/>
    <property type="match status" value="1"/>
</dbReference>
<dbReference type="PIRSF" id="PIRSF000114">
    <property type="entry name" value="Glycerol-3-P_dh"/>
    <property type="match status" value="1"/>
</dbReference>
<dbReference type="PRINTS" id="PR00077">
    <property type="entry name" value="GPDHDRGNASE"/>
</dbReference>
<dbReference type="SUPFAM" id="SSF48179">
    <property type="entry name" value="6-phosphogluconate dehydrogenase C-terminal domain-like"/>
    <property type="match status" value="1"/>
</dbReference>
<dbReference type="SUPFAM" id="SSF51735">
    <property type="entry name" value="NAD(P)-binding Rossmann-fold domains"/>
    <property type="match status" value="1"/>
</dbReference>
<dbReference type="PROSITE" id="PS00957">
    <property type="entry name" value="NAD_G3PDH"/>
    <property type="match status" value="1"/>
</dbReference>
<comment type="function">
    <text evidence="1">Catalyzes the reduction of the glycolytic intermediate dihydroxyacetone phosphate (DHAP) to sn-glycerol 3-phosphate (G3P), the key precursor for phospholipid synthesis.</text>
</comment>
<comment type="catalytic activity">
    <reaction evidence="1">
        <text>sn-glycerol 3-phosphate + NAD(+) = dihydroxyacetone phosphate + NADH + H(+)</text>
        <dbReference type="Rhea" id="RHEA:11092"/>
        <dbReference type="ChEBI" id="CHEBI:15378"/>
        <dbReference type="ChEBI" id="CHEBI:57540"/>
        <dbReference type="ChEBI" id="CHEBI:57597"/>
        <dbReference type="ChEBI" id="CHEBI:57642"/>
        <dbReference type="ChEBI" id="CHEBI:57945"/>
        <dbReference type="EC" id="1.1.1.94"/>
    </reaction>
    <physiologicalReaction direction="right-to-left" evidence="1">
        <dbReference type="Rhea" id="RHEA:11094"/>
    </physiologicalReaction>
</comment>
<comment type="catalytic activity">
    <reaction evidence="1">
        <text>sn-glycerol 3-phosphate + NADP(+) = dihydroxyacetone phosphate + NADPH + H(+)</text>
        <dbReference type="Rhea" id="RHEA:11096"/>
        <dbReference type="ChEBI" id="CHEBI:15378"/>
        <dbReference type="ChEBI" id="CHEBI:57597"/>
        <dbReference type="ChEBI" id="CHEBI:57642"/>
        <dbReference type="ChEBI" id="CHEBI:57783"/>
        <dbReference type="ChEBI" id="CHEBI:58349"/>
        <dbReference type="EC" id="1.1.1.94"/>
    </reaction>
    <physiologicalReaction direction="right-to-left" evidence="1">
        <dbReference type="Rhea" id="RHEA:11098"/>
    </physiologicalReaction>
</comment>
<comment type="pathway">
    <text evidence="1">Membrane lipid metabolism; glycerophospholipid metabolism.</text>
</comment>
<comment type="subcellular location">
    <subcellularLocation>
        <location evidence="1">Cytoplasm</location>
    </subcellularLocation>
</comment>
<comment type="similarity">
    <text evidence="1">Belongs to the NAD-dependent glycerol-3-phosphate dehydrogenase family.</text>
</comment>
<feature type="chain" id="PRO_1000080297" description="Glycerol-3-phosphate dehydrogenase [NAD(P)+]">
    <location>
        <begin position="1"/>
        <end position="341"/>
    </location>
</feature>
<feature type="active site" description="Proton acceptor" evidence="1">
    <location>
        <position position="192"/>
    </location>
</feature>
<feature type="binding site" evidence="1">
    <location>
        <position position="11"/>
    </location>
    <ligand>
        <name>NADPH</name>
        <dbReference type="ChEBI" id="CHEBI:57783"/>
    </ligand>
</feature>
<feature type="binding site" evidence="1">
    <location>
        <position position="12"/>
    </location>
    <ligand>
        <name>NADPH</name>
        <dbReference type="ChEBI" id="CHEBI:57783"/>
    </ligand>
</feature>
<feature type="binding site" evidence="1">
    <location>
        <position position="33"/>
    </location>
    <ligand>
        <name>NADPH</name>
        <dbReference type="ChEBI" id="CHEBI:57783"/>
    </ligand>
</feature>
<feature type="binding site" evidence="1">
    <location>
        <position position="106"/>
    </location>
    <ligand>
        <name>NADPH</name>
        <dbReference type="ChEBI" id="CHEBI:57783"/>
    </ligand>
</feature>
<feature type="binding site" evidence="1">
    <location>
        <position position="106"/>
    </location>
    <ligand>
        <name>sn-glycerol 3-phosphate</name>
        <dbReference type="ChEBI" id="CHEBI:57597"/>
    </ligand>
</feature>
<feature type="binding site" evidence="1">
    <location>
        <position position="137"/>
    </location>
    <ligand>
        <name>sn-glycerol 3-phosphate</name>
        <dbReference type="ChEBI" id="CHEBI:57597"/>
    </ligand>
</feature>
<feature type="binding site" evidence="1">
    <location>
        <position position="139"/>
    </location>
    <ligand>
        <name>sn-glycerol 3-phosphate</name>
        <dbReference type="ChEBI" id="CHEBI:57597"/>
    </ligand>
</feature>
<feature type="binding site" evidence="1">
    <location>
        <position position="141"/>
    </location>
    <ligand>
        <name>NADPH</name>
        <dbReference type="ChEBI" id="CHEBI:57783"/>
    </ligand>
</feature>
<feature type="binding site" evidence="1">
    <location>
        <position position="192"/>
    </location>
    <ligand>
        <name>sn-glycerol 3-phosphate</name>
        <dbReference type="ChEBI" id="CHEBI:57597"/>
    </ligand>
</feature>
<feature type="binding site" evidence="1">
    <location>
        <position position="245"/>
    </location>
    <ligand>
        <name>sn-glycerol 3-phosphate</name>
        <dbReference type="ChEBI" id="CHEBI:57597"/>
    </ligand>
</feature>
<feature type="binding site" evidence="1">
    <location>
        <position position="255"/>
    </location>
    <ligand>
        <name>sn-glycerol 3-phosphate</name>
        <dbReference type="ChEBI" id="CHEBI:57597"/>
    </ligand>
</feature>
<feature type="binding site" evidence="1">
    <location>
        <position position="256"/>
    </location>
    <ligand>
        <name>NADPH</name>
        <dbReference type="ChEBI" id="CHEBI:57783"/>
    </ligand>
</feature>
<feature type="binding site" evidence="1">
    <location>
        <position position="256"/>
    </location>
    <ligand>
        <name>sn-glycerol 3-phosphate</name>
        <dbReference type="ChEBI" id="CHEBI:57597"/>
    </ligand>
</feature>
<feature type="binding site" evidence="1">
    <location>
        <position position="257"/>
    </location>
    <ligand>
        <name>sn-glycerol 3-phosphate</name>
        <dbReference type="ChEBI" id="CHEBI:57597"/>
    </ligand>
</feature>
<feature type="binding site" evidence="1">
    <location>
        <position position="280"/>
    </location>
    <ligand>
        <name>NADPH</name>
        <dbReference type="ChEBI" id="CHEBI:57783"/>
    </ligand>
</feature>
<feature type="binding site" evidence="1">
    <location>
        <position position="282"/>
    </location>
    <ligand>
        <name>NADPH</name>
        <dbReference type="ChEBI" id="CHEBI:57783"/>
    </ligand>
</feature>
<evidence type="ECO:0000255" key="1">
    <source>
        <dbReference type="HAMAP-Rule" id="MF_00394"/>
    </source>
</evidence>
<gene>
    <name evidence="1" type="primary">gpsA</name>
    <name type="ordered locus">Bcer98_1228</name>
</gene>
<keyword id="KW-0963">Cytoplasm</keyword>
<keyword id="KW-0444">Lipid biosynthesis</keyword>
<keyword id="KW-0443">Lipid metabolism</keyword>
<keyword id="KW-0520">NAD</keyword>
<keyword id="KW-0521">NADP</keyword>
<keyword id="KW-0547">Nucleotide-binding</keyword>
<keyword id="KW-0560">Oxidoreductase</keyword>
<keyword id="KW-0594">Phospholipid biosynthesis</keyword>
<keyword id="KW-1208">Phospholipid metabolism</keyword>
<organism>
    <name type="scientific">Bacillus cytotoxicus (strain DSM 22905 / CIP 110041 / 391-98 / NVH 391-98)</name>
    <dbReference type="NCBI Taxonomy" id="315749"/>
    <lineage>
        <taxon>Bacteria</taxon>
        <taxon>Bacillati</taxon>
        <taxon>Bacillota</taxon>
        <taxon>Bacilli</taxon>
        <taxon>Bacillales</taxon>
        <taxon>Bacillaceae</taxon>
        <taxon>Bacillus</taxon>
        <taxon>Bacillus cereus group</taxon>
    </lineage>
</organism>
<reference key="1">
    <citation type="journal article" date="2008" name="Chem. Biol. Interact.">
        <title>Extending the Bacillus cereus group genomics to putative food-borne pathogens of different toxicity.</title>
        <authorList>
            <person name="Lapidus A."/>
            <person name="Goltsman E."/>
            <person name="Auger S."/>
            <person name="Galleron N."/>
            <person name="Segurens B."/>
            <person name="Dossat C."/>
            <person name="Land M.L."/>
            <person name="Broussolle V."/>
            <person name="Brillard J."/>
            <person name="Guinebretiere M.-H."/>
            <person name="Sanchis V."/>
            <person name="Nguen-the C."/>
            <person name="Lereclus D."/>
            <person name="Richardson P."/>
            <person name="Wincker P."/>
            <person name="Weissenbach J."/>
            <person name="Ehrlich S.D."/>
            <person name="Sorokin A."/>
        </authorList>
    </citation>
    <scope>NUCLEOTIDE SEQUENCE [LARGE SCALE GENOMIC DNA]</scope>
    <source>
        <strain>DSM 22905 / CIP 110041 / 391-98 / NVH 391-98</strain>
    </source>
</reference>
<protein>
    <recommendedName>
        <fullName evidence="1">Glycerol-3-phosphate dehydrogenase [NAD(P)+]</fullName>
        <ecNumber evidence="1">1.1.1.94</ecNumber>
    </recommendedName>
    <alternativeName>
        <fullName evidence="1">NAD(P)(+)-dependent glycerol-3-phosphate dehydrogenase</fullName>
    </alternativeName>
    <alternativeName>
        <fullName evidence="1">NAD(P)H-dependent dihydroxyacetone-phosphate reductase</fullName>
    </alternativeName>
</protein>
<proteinExistence type="inferred from homology"/>
<name>GPDA_BACCN</name>